<keyword id="KW-0175">Coiled coil</keyword>
<keyword id="KW-0256">Endoplasmic reticulum</keyword>
<keyword id="KW-0472">Membrane</keyword>
<keyword id="KW-1185">Reference proteome</keyword>
<keyword id="KW-0812">Transmembrane</keyword>
<keyword id="KW-1133">Transmembrane helix</keyword>
<keyword id="KW-0813">Transport</keyword>
<organism>
    <name type="scientific">Aspergillus niger (strain ATCC MYA-4892 / CBS 513.88 / FGSC A1513)</name>
    <dbReference type="NCBI Taxonomy" id="425011"/>
    <lineage>
        <taxon>Eukaryota</taxon>
        <taxon>Fungi</taxon>
        <taxon>Dikarya</taxon>
        <taxon>Ascomycota</taxon>
        <taxon>Pezizomycotina</taxon>
        <taxon>Eurotiomycetes</taxon>
        <taxon>Eurotiomycetidae</taxon>
        <taxon>Eurotiales</taxon>
        <taxon>Aspergillaceae</taxon>
        <taxon>Aspergillus</taxon>
        <taxon>Aspergillus subgen. Circumdati</taxon>
    </lineage>
</organism>
<comment type="function">
    <text evidence="1">Required for the post-translational delivery of tail-anchored (TA) proteins to the endoplasmic reticulum. Acts as a membrane receptor for soluble get3, which recognizes and selectively binds the transmembrane domain of TA proteins in the cytosol.</text>
</comment>
<comment type="subunit">
    <text evidence="1">Interacts with get3.</text>
</comment>
<comment type="subcellular location">
    <subcellularLocation>
        <location evidence="1">Endoplasmic reticulum membrane</location>
        <topology evidence="1">Multi-pass membrane protein</topology>
    </subcellularLocation>
</comment>
<comment type="similarity">
    <text evidence="1">Belongs to the WRB/GET1 family.</text>
</comment>
<name>GET1_ASPNC</name>
<reference key="1">
    <citation type="journal article" date="2007" name="Nat. Biotechnol.">
        <title>Genome sequencing and analysis of the versatile cell factory Aspergillus niger CBS 513.88.</title>
        <authorList>
            <person name="Pel H.J."/>
            <person name="de Winde J.H."/>
            <person name="Archer D.B."/>
            <person name="Dyer P.S."/>
            <person name="Hofmann G."/>
            <person name="Schaap P.J."/>
            <person name="Turner G."/>
            <person name="de Vries R.P."/>
            <person name="Albang R."/>
            <person name="Albermann K."/>
            <person name="Andersen M.R."/>
            <person name="Bendtsen J.D."/>
            <person name="Benen J.A.E."/>
            <person name="van den Berg M."/>
            <person name="Breestraat S."/>
            <person name="Caddick M.X."/>
            <person name="Contreras R."/>
            <person name="Cornell M."/>
            <person name="Coutinho P.M."/>
            <person name="Danchin E.G.J."/>
            <person name="Debets A.J.M."/>
            <person name="Dekker P."/>
            <person name="van Dijck P.W.M."/>
            <person name="van Dijk A."/>
            <person name="Dijkhuizen L."/>
            <person name="Driessen A.J.M."/>
            <person name="d'Enfert C."/>
            <person name="Geysens S."/>
            <person name="Goosen C."/>
            <person name="Groot G.S.P."/>
            <person name="de Groot P.W.J."/>
            <person name="Guillemette T."/>
            <person name="Henrissat B."/>
            <person name="Herweijer M."/>
            <person name="van den Hombergh J.P.T.W."/>
            <person name="van den Hondel C.A.M.J.J."/>
            <person name="van der Heijden R.T.J.M."/>
            <person name="van der Kaaij R.M."/>
            <person name="Klis F.M."/>
            <person name="Kools H.J."/>
            <person name="Kubicek C.P."/>
            <person name="van Kuyk P.A."/>
            <person name="Lauber J."/>
            <person name="Lu X."/>
            <person name="van der Maarel M.J.E.C."/>
            <person name="Meulenberg R."/>
            <person name="Menke H."/>
            <person name="Mortimer M.A."/>
            <person name="Nielsen J."/>
            <person name="Oliver S.G."/>
            <person name="Olsthoorn M."/>
            <person name="Pal K."/>
            <person name="van Peij N.N.M.E."/>
            <person name="Ram A.F.J."/>
            <person name="Rinas U."/>
            <person name="Roubos J.A."/>
            <person name="Sagt C.M.J."/>
            <person name="Schmoll M."/>
            <person name="Sun J."/>
            <person name="Ussery D."/>
            <person name="Varga J."/>
            <person name="Vervecken W."/>
            <person name="van de Vondervoort P.J.J."/>
            <person name="Wedler H."/>
            <person name="Woesten H.A.B."/>
            <person name="Zeng A.-P."/>
            <person name="van Ooyen A.J.J."/>
            <person name="Visser J."/>
            <person name="Stam H."/>
        </authorList>
    </citation>
    <scope>NUCLEOTIDE SEQUENCE [LARGE SCALE GENOMIC DNA]</scope>
    <source>
        <strain>ATCC MYA-4892 / CBS 513.88 / FGSC A1513</strain>
    </source>
</reference>
<feature type="chain" id="PRO_5000219838" description="Protein get1">
    <location>
        <begin position="1"/>
        <end position="196"/>
    </location>
</feature>
<feature type="topological domain" description="Lumenal" evidence="1">
    <location>
        <begin position="1"/>
        <end position="4"/>
    </location>
</feature>
<feature type="transmembrane region" description="Helical" evidence="1">
    <location>
        <begin position="5"/>
        <end position="24"/>
    </location>
</feature>
<feature type="topological domain" description="Cytoplasmic" evidence="1">
    <location>
        <begin position="25"/>
        <end position="110"/>
    </location>
</feature>
<feature type="transmembrane region" description="Helical" evidence="1">
    <location>
        <begin position="111"/>
        <end position="131"/>
    </location>
</feature>
<feature type="topological domain" description="Lumenal" evidence="1">
    <location>
        <begin position="132"/>
        <end position="155"/>
    </location>
</feature>
<feature type="transmembrane region" description="Helical" evidence="1">
    <location>
        <begin position="156"/>
        <end position="172"/>
    </location>
</feature>
<feature type="topological domain" description="Cytoplasmic" evidence="1">
    <location>
        <begin position="173"/>
        <end position="196"/>
    </location>
</feature>
<feature type="coiled-coil region" evidence="1">
    <location>
        <begin position="42"/>
        <end position="99"/>
    </location>
</feature>
<proteinExistence type="inferred from homology"/>
<protein>
    <recommendedName>
        <fullName evidence="1">Protein get1</fullName>
    </recommendedName>
    <alternativeName>
        <fullName evidence="1">Guided entry of tail-anchored proteins 1</fullName>
    </alternativeName>
</protein>
<evidence type="ECO:0000255" key="1">
    <source>
        <dbReference type="HAMAP-Rule" id="MF_03113"/>
    </source>
</evidence>
<accession>A2QHQ3</accession>
<sequence>MLSLLWSVFLVHVAIYLVNTIGASTIDNLLWLLYLKVPTSTSKKYKEQNRLKREVVQLKRDMNNTSSQDEFAKWAKLRRKHDKTMEEYEAINKQLVSQKTSFDWGVKIVRWFGTSGLKFFLQFWYSKTPVFHLPEGWLPYYVAWLLSFPRAPMGSVSIQIWSNVCATAITTMAEVVTAVLLQRATAAAAPAAKKTQ</sequence>
<gene>
    <name type="primary">get1</name>
    <name type="ORF">An04g00670</name>
</gene>
<dbReference type="EMBL" id="AM270065">
    <property type="protein sequence ID" value="CAK38523.1"/>
    <property type="molecule type" value="Genomic_DNA"/>
</dbReference>
<dbReference type="RefSeq" id="XP_001401431.1">
    <property type="nucleotide sequence ID" value="XM_001401394.1"/>
</dbReference>
<dbReference type="SMR" id="A2QHQ3"/>
<dbReference type="TCDB" id="3.A.19.1.2">
    <property type="family name" value="the guided entry of tail anchored protein (get) family"/>
</dbReference>
<dbReference type="EnsemblFungi" id="CAK38523">
    <property type="protein sequence ID" value="CAK38523"/>
    <property type="gene ID" value="An04g00670"/>
</dbReference>
<dbReference type="GeneID" id="4990468"/>
<dbReference type="KEGG" id="ang:An04g00670"/>
<dbReference type="VEuPathDB" id="FungiDB:An04g00670"/>
<dbReference type="HOGENOM" id="CLU_089418_1_0_1"/>
<dbReference type="Proteomes" id="UP000006706">
    <property type="component" value="Chromosome 6L"/>
</dbReference>
<dbReference type="GO" id="GO:0005789">
    <property type="term" value="C:endoplasmic reticulum membrane"/>
    <property type="evidence" value="ECO:0007669"/>
    <property type="project" value="UniProtKB-SubCell"/>
</dbReference>
<dbReference type="GO" id="GO:0043529">
    <property type="term" value="C:GET complex"/>
    <property type="evidence" value="ECO:0007669"/>
    <property type="project" value="InterPro"/>
</dbReference>
<dbReference type="GO" id="GO:0043495">
    <property type="term" value="F:protein-membrane adaptor activity"/>
    <property type="evidence" value="ECO:0007669"/>
    <property type="project" value="TreeGrafter"/>
</dbReference>
<dbReference type="GO" id="GO:0071816">
    <property type="term" value="P:tail-anchored membrane protein insertion into ER membrane"/>
    <property type="evidence" value="ECO:0007669"/>
    <property type="project" value="InterPro"/>
</dbReference>
<dbReference type="FunFam" id="1.10.287.660:FF:000006">
    <property type="entry name" value="Protein GET1"/>
    <property type="match status" value="1"/>
</dbReference>
<dbReference type="Gene3D" id="1.10.287.660">
    <property type="entry name" value="Helix hairpin bin"/>
    <property type="match status" value="1"/>
</dbReference>
<dbReference type="HAMAP" id="MF_03113">
    <property type="entry name" value="Get1"/>
    <property type="match status" value="1"/>
</dbReference>
<dbReference type="InterPro" id="IPR028945">
    <property type="entry name" value="Get1"/>
</dbReference>
<dbReference type="InterPro" id="IPR027538">
    <property type="entry name" value="Get1_fungi"/>
</dbReference>
<dbReference type="InterPro" id="IPR029012">
    <property type="entry name" value="Helix_hairpin_bin_sf"/>
</dbReference>
<dbReference type="PANTHER" id="PTHR42650:SF1">
    <property type="entry name" value="GUIDED ENTRY OF TAIL-ANCHORED PROTEINS FACTOR 1"/>
    <property type="match status" value="1"/>
</dbReference>
<dbReference type="PANTHER" id="PTHR42650">
    <property type="entry name" value="TAIL-ANCHORED PROTEIN INSERTION RECEPTOR WRB"/>
    <property type="match status" value="1"/>
</dbReference>
<dbReference type="Pfam" id="PF04420">
    <property type="entry name" value="CHD5"/>
    <property type="match status" value="1"/>
</dbReference>